<protein>
    <recommendedName>
        <fullName evidence="1">Recombination protein RecR</fullName>
    </recommendedName>
</protein>
<keyword id="KW-0227">DNA damage</keyword>
<keyword id="KW-0233">DNA recombination</keyword>
<keyword id="KW-0234">DNA repair</keyword>
<keyword id="KW-0479">Metal-binding</keyword>
<keyword id="KW-1185">Reference proteome</keyword>
<keyword id="KW-0862">Zinc</keyword>
<keyword id="KW-0863">Zinc-finger</keyword>
<organism>
    <name type="scientific">Lactiplantibacillus plantarum (strain ATCC BAA-793 / NCIMB 8826 / WCFS1)</name>
    <name type="common">Lactobacillus plantarum</name>
    <dbReference type="NCBI Taxonomy" id="220668"/>
    <lineage>
        <taxon>Bacteria</taxon>
        <taxon>Bacillati</taxon>
        <taxon>Bacillota</taxon>
        <taxon>Bacilli</taxon>
        <taxon>Lactobacillales</taxon>
        <taxon>Lactobacillaceae</taxon>
        <taxon>Lactiplantibacillus</taxon>
    </lineage>
</organism>
<evidence type="ECO:0000255" key="1">
    <source>
        <dbReference type="HAMAP-Rule" id="MF_00017"/>
    </source>
</evidence>
<gene>
    <name evidence="1" type="primary">recR</name>
    <name type="ordered locus">lp_0700</name>
</gene>
<dbReference type="EMBL" id="AL935263">
    <property type="protein sequence ID" value="CCC78175.1"/>
    <property type="molecule type" value="Genomic_DNA"/>
</dbReference>
<dbReference type="RefSeq" id="WP_003637790.1">
    <property type="nucleotide sequence ID" value="NC_004567.2"/>
</dbReference>
<dbReference type="RefSeq" id="YP_004888689.1">
    <property type="nucleotide sequence ID" value="NC_004567.2"/>
</dbReference>
<dbReference type="SMR" id="Q88YP8"/>
<dbReference type="STRING" id="220668.lp_0700"/>
<dbReference type="EnsemblBacteria" id="CCC78175">
    <property type="protein sequence ID" value="CCC78175"/>
    <property type="gene ID" value="lp_0700"/>
</dbReference>
<dbReference type="GeneID" id="89668276"/>
<dbReference type="KEGG" id="lpl:lp_0700"/>
<dbReference type="PATRIC" id="fig|220668.9.peg.588"/>
<dbReference type="eggNOG" id="COG0353">
    <property type="taxonomic scope" value="Bacteria"/>
</dbReference>
<dbReference type="HOGENOM" id="CLU_060739_1_0_9"/>
<dbReference type="OrthoDB" id="9802672at2"/>
<dbReference type="PhylomeDB" id="Q88YP8"/>
<dbReference type="Proteomes" id="UP000000432">
    <property type="component" value="Chromosome"/>
</dbReference>
<dbReference type="GO" id="GO:0003677">
    <property type="term" value="F:DNA binding"/>
    <property type="evidence" value="ECO:0007669"/>
    <property type="project" value="UniProtKB-UniRule"/>
</dbReference>
<dbReference type="GO" id="GO:0008270">
    <property type="term" value="F:zinc ion binding"/>
    <property type="evidence" value="ECO:0007669"/>
    <property type="project" value="UniProtKB-KW"/>
</dbReference>
<dbReference type="GO" id="GO:0006310">
    <property type="term" value="P:DNA recombination"/>
    <property type="evidence" value="ECO:0007669"/>
    <property type="project" value="UniProtKB-UniRule"/>
</dbReference>
<dbReference type="GO" id="GO:0006281">
    <property type="term" value="P:DNA repair"/>
    <property type="evidence" value="ECO:0007669"/>
    <property type="project" value="UniProtKB-UniRule"/>
</dbReference>
<dbReference type="CDD" id="cd01025">
    <property type="entry name" value="TOPRIM_recR"/>
    <property type="match status" value="1"/>
</dbReference>
<dbReference type="Gene3D" id="3.30.60.80">
    <property type="match status" value="1"/>
</dbReference>
<dbReference type="Gene3D" id="3.40.1360.10">
    <property type="match status" value="1"/>
</dbReference>
<dbReference type="Gene3D" id="6.10.250.240">
    <property type="match status" value="1"/>
</dbReference>
<dbReference type="Gene3D" id="1.10.8.420">
    <property type="entry name" value="RecR Domain 1"/>
    <property type="match status" value="1"/>
</dbReference>
<dbReference type="HAMAP" id="MF_00017">
    <property type="entry name" value="RecR"/>
    <property type="match status" value="1"/>
</dbReference>
<dbReference type="InterPro" id="IPR000093">
    <property type="entry name" value="DNA_Rcmb_RecR"/>
</dbReference>
<dbReference type="InterPro" id="IPR023627">
    <property type="entry name" value="Rcmb_RecR"/>
</dbReference>
<dbReference type="InterPro" id="IPR015967">
    <property type="entry name" value="Rcmb_RecR_Znf"/>
</dbReference>
<dbReference type="InterPro" id="IPR006171">
    <property type="entry name" value="TOPRIM_dom"/>
</dbReference>
<dbReference type="InterPro" id="IPR034137">
    <property type="entry name" value="TOPRIM_RecR"/>
</dbReference>
<dbReference type="NCBIfam" id="TIGR00615">
    <property type="entry name" value="recR"/>
    <property type="match status" value="1"/>
</dbReference>
<dbReference type="PANTHER" id="PTHR30446">
    <property type="entry name" value="RECOMBINATION PROTEIN RECR"/>
    <property type="match status" value="1"/>
</dbReference>
<dbReference type="PANTHER" id="PTHR30446:SF0">
    <property type="entry name" value="RECOMBINATION PROTEIN RECR"/>
    <property type="match status" value="1"/>
</dbReference>
<dbReference type="Pfam" id="PF21175">
    <property type="entry name" value="RecR_C"/>
    <property type="match status" value="1"/>
</dbReference>
<dbReference type="Pfam" id="PF21176">
    <property type="entry name" value="RecR_HhH"/>
    <property type="match status" value="1"/>
</dbReference>
<dbReference type="Pfam" id="PF02132">
    <property type="entry name" value="RecR_ZnF"/>
    <property type="match status" value="1"/>
</dbReference>
<dbReference type="Pfam" id="PF13662">
    <property type="entry name" value="Toprim_4"/>
    <property type="match status" value="1"/>
</dbReference>
<dbReference type="SMART" id="SM00493">
    <property type="entry name" value="TOPRIM"/>
    <property type="match status" value="1"/>
</dbReference>
<dbReference type="SUPFAM" id="SSF111304">
    <property type="entry name" value="Recombination protein RecR"/>
    <property type="match status" value="1"/>
</dbReference>
<dbReference type="PROSITE" id="PS01300">
    <property type="entry name" value="RECR"/>
    <property type="match status" value="1"/>
</dbReference>
<dbReference type="PROSITE" id="PS50880">
    <property type="entry name" value="TOPRIM"/>
    <property type="match status" value="1"/>
</dbReference>
<comment type="function">
    <text evidence="1">May play a role in DNA repair. It seems to be involved in an RecBC-independent recombinational process of DNA repair. It may act with RecF and RecO.</text>
</comment>
<comment type="similarity">
    <text evidence="1">Belongs to the RecR family.</text>
</comment>
<accession>Q88YP8</accession>
<accession>F9ULT6</accession>
<reference key="1">
    <citation type="journal article" date="2003" name="Proc. Natl. Acad. Sci. U.S.A.">
        <title>Complete genome sequence of Lactobacillus plantarum WCFS1.</title>
        <authorList>
            <person name="Kleerebezem M."/>
            <person name="Boekhorst J."/>
            <person name="van Kranenburg R."/>
            <person name="Molenaar D."/>
            <person name="Kuipers O.P."/>
            <person name="Leer R."/>
            <person name="Tarchini R."/>
            <person name="Peters S.A."/>
            <person name="Sandbrink H.M."/>
            <person name="Fiers M.W.E.J."/>
            <person name="Stiekema W."/>
            <person name="Klein Lankhorst R.M."/>
            <person name="Bron P.A."/>
            <person name="Hoffer S.M."/>
            <person name="Nierop Groot M.N."/>
            <person name="Kerkhoven R."/>
            <person name="De Vries M."/>
            <person name="Ursing B."/>
            <person name="De Vos W.M."/>
            <person name="Siezen R.J."/>
        </authorList>
    </citation>
    <scope>NUCLEOTIDE SEQUENCE [LARGE SCALE GENOMIC DNA]</scope>
    <source>
        <strain>ATCC BAA-793 / NCIMB 8826 / WCFS1</strain>
    </source>
</reference>
<reference key="2">
    <citation type="journal article" date="2012" name="J. Bacteriol.">
        <title>Complete resequencing and reannotation of the Lactobacillus plantarum WCFS1 genome.</title>
        <authorList>
            <person name="Siezen R.J."/>
            <person name="Francke C."/>
            <person name="Renckens B."/>
            <person name="Boekhorst J."/>
            <person name="Wels M."/>
            <person name="Kleerebezem M."/>
            <person name="van Hijum S.A."/>
        </authorList>
    </citation>
    <scope>NUCLEOTIDE SEQUENCE [LARGE SCALE GENOMIC DNA]</scope>
    <scope>GENOME REANNOTATION</scope>
    <source>
        <strain>ATCC BAA-793 / NCIMB 8826 / WCFS1</strain>
    </source>
</reference>
<feature type="chain" id="PRO_0000190336" description="Recombination protein RecR">
    <location>
        <begin position="1"/>
        <end position="199"/>
    </location>
</feature>
<feature type="domain" description="Toprim" evidence="1">
    <location>
        <begin position="80"/>
        <end position="176"/>
    </location>
</feature>
<feature type="zinc finger region" description="C4-type" evidence="1">
    <location>
        <begin position="57"/>
        <end position="72"/>
    </location>
</feature>
<name>RECR_LACPL</name>
<proteinExistence type="inferred from homology"/>
<sequence>MQYPEPIAKLIDSYMKLPGIGGKTATRLAFYTIDMNGDDVTEFAKSLIAAKRDLHFCSICGNITEDDPCVICKDKSRDQSTVLVVEEAKDVMAMEKIKEYNGLYHVLHGVLSPIDGKGPEDINIASLLKRLQQNEAIKEVIIATNATPEGEATAMYISRLVKPAGIKVTRLAHGLSVGSDIQYADEMTLFKAVEGRQEM</sequence>